<reference key="1">
    <citation type="submission" date="2006-05" db="EMBL/GenBank/DDBJ databases">
        <title>Complete sequence of chromosome of Silicibacter sp. TM1040.</title>
        <authorList>
            <consortium name="US DOE Joint Genome Institute"/>
            <person name="Copeland A."/>
            <person name="Lucas S."/>
            <person name="Lapidus A."/>
            <person name="Barry K."/>
            <person name="Detter J.C."/>
            <person name="Glavina del Rio T."/>
            <person name="Hammon N."/>
            <person name="Israni S."/>
            <person name="Dalin E."/>
            <person name="Tice H."/>
            <person name="Pitluck S."/>
            <person name="Brettin T."/>
            <person name="Bruce D."/>
            <person name="Han C."/>
            <person name="Tapia R."/>
            <person name="Goodwin L."/>
            <person name="Thompson L.S."/>
            <person name="Gilna P."/>
            <person name="Schmutz J."/>
            <person name="Larimer F."/>
            <person name="Land M."/>
            <person name="Hauser L."/>
            <person name="Kyrpides N."/>
            <person name="Kim E."/>
            <person name="Belas R."/>
            <person name="Moran M.A."/>
            <person name="Buchan A."/>
            <person name="Gonzalez J.M."/>
            <person name="Schell M.A."/>
            <person name="Sun F."/>
            <person name="Richardson P."/>
        </authorList>
    </citation>
    <scope>NUCLEOTIDE SEQUENCE [LARGE SCALE GENOMIC DNA]</scope>
    <source>
        <strain>TM1040</strain>
    </source>
</reference>
<gene>
    <name evidence="1" type="primary">folE2</name>
    <name type="ordered locus">TM1040_1937</name>
</gene>
<name>GCH4_RUEST</name>
<protein>
    <recommendedName>
        <fullName evidence="1">GTP cyclohydrolase FolE2</fullName>
        <ecNumber evidence="1">3.5.4.16</ecNumber>
    </recommendedName>
</protein>
<sequence>MNIHSRDVNETPDRSDAEQALAVLRRWAGEASETEVAQLDPAIARLLPGQELQNYPDLKRQYPDDFDANESYRATLPDLQNGPSSLIRGAKEQIQHVGISNFRLPIRFHTRDNGDLTLETSVTGTVSLDAEKKGINMSRIMRSFYKHAEKVFSFDVMEAALEDYLSDLESGDARLQMRFSFPVKVQSLRSGLSGYQYYDVALELVQMAGQRHRIVHLDYVYSSTCPCSLELSEHARQARGQLATPHSQRSVARISVQMEQDGGCLWFEDLIDHCRRAVPTETQVMVKREDEQAFAELNAANPIFVEDAARLFCEALQSDARVGDFRVVASHQESLHSHDAVSVLTQGTMFAAPSLDPQLFSTLIHRG</sequence>
<dbReference type="EC" id="3.5.4.16" evidence="1"/>
<dbReference type="EMBL" id="CP000377">
    <property type="protein sequence ID" value="ABF64670.1"/>
    <property type="molecule type" value="Genomic_DNA"/>
</dbReference>
<dbReference type="RefSeq" id="WP_011539263.1">
    <property type="nucleotide sequence ID" value="NC_008044.1"/>
</dbReference>
<dbReference type="SMR" id="Q1GF96"/>
<dbReference type="STRING" id="292414.TM1040_1937"/>
<dbReference type="KEGG" id="sit:TM1040_1937"/>
<dbReference type="eggNOG" id="COG1469">
    <property type="taxonomic scope" value="Bacteria"/>
</dbReference>
<dbReference type="HOGENOM" id="CLU_062816_0_1_5"/>
<dbReference type="OrthoDB" id="239637at2"/>
<dbReference type="UniPathway" id="UPA00848">
    <property type="reaction ID" value="UER00151"/>
</dbReference>
<dbReference type="Proteomes" id="UP000000636">
    <property type="component" value="Chromosome"/>
</dbReference>
<dbReference type="GO" id="GO:0003934">
    <property type="term" value="F:GTP cyclohydrolase I activity"/>
    <property type="evidence" value="ECO:0007669"/>
    <property type="project" value="UniProtKB-UniRule"/>
</dbReference>
<dbReference type="GO" id="GO:0046654">
    <property type="term" value="P:tetrahydrofolate biosynthetic process"/>
    <property type="evidence" value="ECO:0007669"/>
    <property type="project" value="UniProtKB-UniRule"/>
</dbReference>
<dbReference type="Gene3D" id="3.10.270.10">
    <property type="entry name" value="Urate Oxidase"/>
    <property type="match status" value="1"/>
</dbReference>
<dbReference type="HAMAP" id="MF_01527_B">
    <property type="entry name" value="GTP_cyclohydrol_B"/>
    <property type="match status" value="1"/>
</dbReference>
<dbReference type="InterPro" id="IPR022838">
    <property type="entry name" value="GTP_cyclohydrolase_FolE2"/>
</dbReference>
<dbReference type="InterPro" id="IPR003801">
    <property type="entry name" value="GTP_cyclohydrolase_FolE2/MptA"/>
</dbReference>
<dbReference type="NCBIfam" id="NF010200">
    <property type="entry name" value="PRK13674.1-1"/>
    <property type="match status" value="1"/>
</dbReference>
<dbReference type="PANTHER" id="PTHR36445">
    <property type="entry name" value="GTP CYCLOHYDROLASE MPTA"/>
    <property type="match status" value="1"/>
</dbReference>
<dbReference type="PANTHER" id="PTHR36445:SF1">
    <property type="entry name" value="GTP CYCLOHYDROLASE MPTA"/>
    <property type="match status" value="1"/>
</dbReference>
<dbReference type="Pfam" id="PF02649">
    <property type="entry name" value="GCHY-1"/>
    <property type="match status" value="1"/>
</dbReference>
<organism>
    <name type="scientific">Ruegeria sp. (strain TM1040)</name>
    <name type="common">Silicibacter sp.</name>
    <dbReference type="NCBI Taxonomy" id="292414"/>
    <lineage>
        <taxon>Bacteria</taxon>
        <taxon>Pseudomonadati</taxon>
        <taxon>Pseudomonadota</taxon>
        <taxon>Alphaproteobacteria</taxon>
        <taxon>Rhodobacterales</taxon>
        <taxon>Roseobacteraceae</taxon>
        <taxon>Ruegeria</taxon>
    </lineage>
</organism>
<proteinExistence type="inferred from homology"/>
<comment type="function">
    <text evidence="1">Converts GTP to 7,8-dihydroneopterin triphosphate.</text>
</comment>
<comment type="catalytic activity">
    <reaction evidence="1">
        <text>GTP + H2O = 7,8-dihydroneopterin 3'-triphosphate + formate + H(+)</text>
        <dbReference type="Rhea" id="RHEA:17473"/>
        <dbReference type="ChEBI" id="CHEBI:15377"/>
        <dbReference type="ChEBI" id="CHEBI:15378"/>
        <dbReference type="ChEBI" id="CHEBI:15740"/>
        <dbReference type="ChEBI" id="CHEBI:37565"/>
        <dbReference type="ChEBI" id="CHEBI:58462"/>
        <dbReference type="EC" id="3.5.4.16"/>
    </reaction>
</comment>
<comment type="pathway">
    <text evidence="1">Cofactor biosynthesis; 7,8-dihydroneopterin triphosphate biosynthesis; 7,8-dihydroneopterin triphosphate from GTP: step 1/1.</text>
</comment>
<comment type="similarity">
    <text evidence="1">Belongs to the GTP cyclohydrolase IV family.</text>
</comment>
<evidence type="ECO:0000255" key="1">
    <source>
        <dbReference type="HAMAP-Rule" id="MF_01527"/>
    </source>
</evidence>
<keyword id="KW-0378">Hydrolase</keyword>
<keyword id="KW-1185">Reference proteome</keyword>
<feature type="chain" id="PRO_0000289521" description="GTP cyclohydrolase FolE2">
    <location>
        <begin position="1"/>
        <end position="367"/>
    </location>
</feature>
<feature type="site" description="May be catalytically important" evidence="1">
    <location>
        <position position="225"/>
    </location>
</feature>
<accession>Q1GF96</accession>